<protein>
    <recommendedName>
        <fullName evidence="1">DNA replication and repair protein RecF</fullName>
    </recommendedName>
</protein>
<sequence>MIIKSIQLSNFRNYEKLDISFDTETNIIYGDNAQGKTNILEAAYLSGTTKSHKGSKDKEMIRFGEDEAHIRTIVEKNDKEYRIDMHLRKNGAKGVAINKMPIKKASELFGILNIVFFSPEDLNIIKNGPAERRRFIDLELCQLDKIYLSNLSKYNKTLVQRNRLLKDIAYRPDLIDTLQVWDMQLLEYGRHVIKKRREFVNELNEIIQDIHSNISGGREKLILKYEPSIDDIFFEDELLKARSRDLKLCQTTVGPHRDDMLFSVDGVDIRKYGSQGQQRTSALSLKLSEISLVKKNINSTPVLLLDDVLSELDGNRQNYLLNSLSDTQTIITCTGLDEFVKNRFQVDKVFHVVKGQVEVIDE</sequence>
<gene>
    <name evidence="1" type="primary">recF</name>
    <name type="ordered locus">EUBREC_0004</name>
</gene>
<evidence type="ECO:0000255" key="1">
    <source>
        <dbReference type="HAMAP-Rule" id="MF_00365"/>
    </source>
</evidence>
<organism>
    <name type="scientific">Agathobacter rectalis (strain ATCC 33656 / DSM 3377 / JCM 17463 / KCTC 5835 / VPI 0990)</name>
    <name type="common">Eubacterium rectale</name>
    <dbReference type="NCBI Taxonomy" id="515619"/>
    <lineage>
        <taxon>Bacteria</taxon>
        <taxon>Bacillati</taxon>
        <taxon>Bacillota</taxon>
        <taxon>Clostridia</taxon>
        <taxon>Lachnospirales</taxon>
        <taxon>Lachnospiraceae</taxon>
        <taxon>Agathobacter</taxon>
    </lineage>
</organism>
<reference key="1">
    <citation type="journal article" date="2009" name="Proc. Natl. Acad. Sci. U.S.A.">
        <title>Characterizing a model human gut microbiota composed of members of its two dominant bacterial phyla.</title>
        <authorList>
            <person name="Mahowald M.A."/>
            <person name="Rey F.E."/>
            <person name="Seedorf H."/>
            <person name="Turnbaugh P.J."/>
            <person name="Fulton R.S."/>
            <person name="Wollam A."/>
            <person name="Shah N."/>
            <person name="Wang C."/>
            <person name="Magrini V."/>
            <person name="Wilson R.K."/>
            <person name="Cantarel B.L."/>
            <person name="Coutinho P.M."/>
            <person name="Henrissat B."/>
            <person name="Crock L.W."/>
            <person name="Russell A."/>
            <person name="Verberkmoes N.C."/>
            <person name="Hettich R.L."/>
            <person name="Gordon J.I."/>
        </authorList>
    </citation>
    <scope>NUCLEOTIDE SEQUENCE [LARGE SCALE GENOMIC DNA]</scope>
    <source>
        <strain>ATCC 33656 / DSM 3377 / JCM 17463 / KCTC 5835 / LMG 30912 / VPI 0990</strain>
    </source>
</reference>
<comment type="function">
    <text evidence="1">The RecF protein is involved in DNA metabolism; it is required for DNA replication and normal SOS inducibility. RecF binds preferentially to single-stranded, linear DNA. It also seems to bind ATP.</text>
</comment>
<comment type="subcellular location">
    <subcellularLocation>
        <location evidence="1">Cytoplasm</location>
    </subcellularLocation>
</comment>
<comment type="similarity">
    <text evidence="1">Belongs to the RecF family.</text>
</comment>
<proteinExistence type="inferred from homology"/>
<keyword id="KW-0067">ATP-binding</keyword>
<keyword id="KW-0963">Cytoplasm</keyword>
<keyword id="KW-0227">DNA damage</keyword>
<keyword id="KW-0234">DNA repair</keyword>
<keyword id="KW-0235">DNA replication</keyword>
<keyword id="KW-0238">DNA-binding</keyword>
<keyword id="KW-0547">Nucleotide-binding</keyword>
<keyword id="KW-0742">SOS response</keyword>
<dbReference type="EMBL" id="CP001107">
    <property type="protein sequence ID" value="ACR73815.1"/>
    <property type="molecule type" value="Genomic_DNA"/>
</dbReference>
<dbReference type="RefSeq" id="WP_012740939.1">
    <property type="nucleotide sequence ID" value="NC_012781.1"/>
</dbReference>
<dbReference type="SMR" id="C4Z940"/>
<dbReference type="STRING" id="515619.EUBREC_0004"/>
<dbReference type="PaxDb" id="515619-EUBREC_0004"/>
<dbReference type="GeneID" id="86986950"/>
<dbReference type="KEGG" id="ere:EUBREC_0004"/>
<dbReference type="HOGENOM" id="CLU_040267_0_1_9"/>
<dbReference type="Proteomes" id="UP000001477">
    <property type="component" value="Chromosome"/>
</dbReference>
<dbReference type="GO" id="GO:0005737">
    <property type="term" value="C:cytoplasm"/>
    <property type="evidence" value="ECO:0007669"/>
    <property type="project" value="UniProtKB-SubCell"/>
</dbReference>
<dbReference type="GO" id="GO:0005524">
    <property type="term" value="F:ATP binding"/>
    <property type="evidence" value="ECO:0007669"/>
    <property type="project" value="UniProtKB-UniRule"/>
</dbReference>
<dbReference type="GO" id="GO:0003697">
    <property type="term" value="F:single-stranded DNA binding"/>
    <property type="evidence" value="ECO:0007669"/>
    <property type="project" value="UniProtKB-UniRule"/>
</dbReference>
<dbReference type="GO" id="GO:0006260">
    <property type="term" value="P:DNA replication"/>
    <property type="evidence" value="ECO:0007669"/>
    <property type="project" value="UniProtKB-UniRule"/>
</dbReference>
<dbReference type="GO" id="GO:0000731">
    <property type="term" value="P:DNA synthesis involved in DNA repair"/>
    <property type="evidence" value="ECO:0007669"/>
    <property type="project" value="TreeGrafter"/>
</dbReference>
<dbReference type="GO" id="GO:0006302">
    <property type="term" value="P:double-strand break repair"/>
    <property type="evidence" value="ECO:0007669"/>
    <property type="project" value="TreeGrafter"/>
</dbReference>
<dbReference type="GO" id="GO:0009432">
    <property type="term" value="P:SOS response"/>
    <property type="evidence" value="ECO:0007669"/>
    <property type="project" value="UniProtKB-UniRule"/>
</dbReference>
<dbReference type="CDD" id="cd03242">
    <property type="entry name" value="ABC_RecF"/>
    <property type="match status" value="1"/>
</dbReference>
<dbReference type="Gene3D" id="3.40.50.300">
    <property type="entry name" value="P-loop containing nucleotide triphosphate hydrolases"/>
    <property type="match status" value="1"/>
</dbReference>
<dbReference type="Gene3D" id="1.20.1050.90">
    <property type="entry name" value="RecF/RecN/SMC, N-terminal domain"/>
    <property type="match status" value="1"/>
</dbReference>
<dbReference type="HAMAP" id="MF_00365">
    <property type="entry name" value="RecF"/>
    <property type="match status" value="1"/>
</dbReference>
<dbReference type="InterPro" id="IPR001238">
    <property type="entry name" value="DNA-binding_RecF"/>
</dbReference>
<dbReference type="InterPro" id="IPR018078">
    <property type="entry name" value="DNA-binding_RecF_CS"/>
</dbReference>
<dbReference type="InterPro" id="IPR027417">
    <property type="entry name" value="P-loop_NTPase"/>
</dbReference>
<dbReference type="InterPro" id="IPR003395">
    <property type="entry name" value="RecF/RecN/SMC_N"/>
</dbReference>
<dbReference type="InterPro" id="IPR042174">
    <property type="entry name" value="RecF_2"/>
</dbReference>
<dbReference type="NCBIfam" id="TIGR00611">
    <property type="entry name" value="recf"/>
    <property type="match status" value="1"/>
</dbReference>
<dbReference type="PANTHER" id="PTHR32182">
    <property type="entry name" value="DNA REPLICATION AND REPAIR PROTEIN RECF"/>
    <property type="match status" value="1"/>
</dbReference>
<dbReference type="PANTHER" id="PTHR32182:SF0">
    <property type="entry name" value="DNA REPLICATION AND REPAIR PROTEIN RECF"/>
    <property type="match status" value="1"/>
</dbReference>
<dbReference type="Pfam" id="PF02463">
    <property type="entry name" value="SMC_N"/>
    <property type="match status" value="1"/>
</dbReference>
<dbReference type="SUPFAM" id="SSF52540">
    <property type="entry name" value="P-loop containing nucleoside triphosphate hydrolases"/>
    <property type="match status" value="1"/>
</dbReference>
<dbReference type="PROSITE" id="PS00618">
    <property type="entry name" value="RECF_2"/>
    <property type="match status" value="1"/>
</dbReference>
<name>RECF_AGARV</name>
<feature type="chain" id="PRO_1000205483" description="DNA replication and repair protein RecF">
    <location>
        <begin position="1"/>
        <end position="362"/>
    </location>
</feature>
<feature type="binding site" evidence="1">
    <location>
        <begin position="30"/>
        <end position="37"/>
    </location>
    <ligand>
        <name>ATP</name>
        <dbReference type="ChEBI" id="CHEBI:30616"/>
    </ligand>
</feature>
<accession>C4Z940</accession>